<protein>
    <recommendedName>
        <fullName evidence="1">2,3,4,5-tetrahydropyridine-2,6-dicarboxylate N-succinyltransferase</fullName>
        <ecNumber evidence="1">2.3.1.117</ecNumber>
    </recommendedName>
    <alternativeName>
        <fullName evidence="1">Tetrahydrodipicolinate N-succinyltransferase</fullName>
        <shortName evidence="1">THP succinyltransferase</shortName>
        <shortName evidence="1">Tetrahydropicolinate succinylase</shortName>
    </alternativeName>
</protein>
<accession>B7GYD0</accession>
<comment type="catalytic activity">
    <reaction evidence="1">
        <text>(S)-2,3,4,5-tetrahydrodipicolinate + succinyl-CoA + H2O = (S)-2-succinylamino-6-oxoheptanedioate + CoA</text>
        <dbReference type="Rhea" id="RHEA:17325"/>
        <dbReference type="ChEBI" id="CHEBI:15377"/>
        <dbReference type="ChEBI" id="CHEBI:15685"/>
        <dbReference type="ChEBI" id="CHEBI:16845"/>
        <dbReference type="ChEBI" id="CHEBI:57287"/>
        <dbReference type="ChEBI" id="CHEBI:57292"/>
        <dbReference type="EC" id="2.3.1.117"/>
    </reaction>
</comment>
<comment type="pathway">
    <text evidence="1">Amino-acid biosynthesis; L-lysine biosynthesis via DAP pathway; LL-2,6-diaminopimelate from (S)-tetrahydrodipicolinate (succinylase route): step 1/3.</text>
</comment>
<comment type="subcellular location">
    <subcellularLocation>
        <location evidence="1">Cytoplasm</location>
    </subcellularLocation>
</comment>
<comment type="similarity">
    <text evidence="1">Belongs to the transferase hexapeptide repeat family.</text>
</comment>
<dbReference type="EC" id="2.3.1.117" evidence="1"/>
<dbReference type="EMBL" id="CP001172">
    <property type="protein sequence ID" value="ACJ57562.1"/>
    <property type="molecule type" value="Genomic_DNA"/>
</dbReference>
<dbReference type="RefSeq" id="WP_000080867.1">
    <property type="nucleotide sequence ID" value="NZ_CP001172.1"/>
</dbReference>
<dbReference type="SMR" id="B7GYD0"/>
<dbReference type="GeneID" id="92894847"/>
<dbReference type="HOGENOM" id="CLU_050859_0_1_6"/>
<dbReference type="UniPathway" id="UPA00034">
    <property type="reaction ID" value="UER00019"/>
</dbReference>
<dbReference type="Proteomes" id="UP000006924">
    <property type="component" value="Chromosome"/>
</dbReference>
<dbReference type="GO" id="GO:0005737">
    <property type="term" value="C:cytoplasm"/>
    <property type="evidence" value="ECO:0007669"/>
    <property type="project" value="UniProtKB-SubCell"/>
</dbReference>
<dbReference type="GO" id="GO:0008666">
    <property type="term" value="F:2,3,4,5-tetrahydropyridine-2,6-dicarboxylate N-succinyltransferase activity"/>
    <property type="evidence" value="ECO:0007669"/>
    <property type="project" value="UniProtKB-UniRule"/>
</dbReference>
<dbReference type="GO" id="GO:0016779">
    <property type="term" value="F:nucleotidyltransferase activity"/>
    <property type="evidence" value="ECO:0007669"/>
    <property type="project" value="TreeGrafter"/>
</dbReference>
<dbReference type="GO" id="GO:0019877">
    <property type="term" value="P:diaminopimelate biosynthetic process"/>
    <property type="evidence" value="ECO:0007669"/>
    <property type="project" value="UniProtKB-UniRule"/>
</dbReference>
<dbReference type="GO" id="GO:0009089">
    <property type="term" value="P:lysine biosynthetic process via diaminopimelate"/>
    <property type="evidence" value="ECO:0007669"/>
    <property type="project" value="UniProtKB-UniRule"/>
</dbReference>
<dbReference type="CDD" id="cd03350">
    <property type="entry name" value="LbH_THP_succinylT"/>
    <property type="match status" value="1"/>
</dbReference>
<dbReference type="Gene3D" id="2.160.10.10">
    <property type="entry name" value="Hexapeptide repeat proteins"/>
    <property type="match status" value="1"/>
</dbReference>
<dbReference type="Gene3D" id="1.10.166.10">
    <property type="entry name" value="Tetrahydrodipicolinate-N-succinyltransferase, N-terminal domain"/>
    <property type="match status" value="1"/>
</dbReference>
<dbReference type="HAMAP" id="MF_00811">
    <property type="entry name" value="DapD"/>
    <property type="match status" value="1"/>
</dbReference>
<dbReference type="InterPro" id="IPR005664">
    <property type="entry name" value="DapD_Trfase_Hexpep_rpt_fam"/>
</dbReference>
<dbReference type="InterPro" id="IPR001451">
    <property type="entry name" value="Hexapep"/>
</dbReference>
<dbReference type="InterPro" id="IPR018357">
    <property type="entry name" value="Hexapep_transf_CS"/>
</dbReference>
<dbReference type="InterPro" id="IPR023180">
    <property type="entry name" value="THP_succinylTrfase_dom1"/>
</dbReference>
<dbReference type="InterPro" id="IPR037133">
    <property type="entry name" value="THP_succinylTrfase_N_sf"/>
</dbReference>
<dbReference type="InterPro" id="IPR011004">
    <property type="entry name" value="Trimer_LpxA-like_sf"/>
</dbReference>
<dbReference type="NCBIfam" id="TIGR00965">
    <property type="entry name" value="dapD"/>
    <property type="match status" value="1"/>
</dbReference>
<dbReference type="NCBIfam" id="NF008808">
    <property type="entry name" value="PRK11830.1"/>
    <property type="match status" value="1"/>
</dbReference>
<dbReference type="PANTHER" id="PTHR19136:SF52">
    <property type="entry name" value="2,3,4,5-TETRAHYDROPYRIDINE-2,6-DICARBOXYLATE N-SUCCINYLTRANSFERASE"/>
    <property type="match status" value="1"/>
</dbReference>
<dbReference type="PANTHER" id="PTHR19136">
    <property type="entry name" value="MOLYBDENUM COFACTOR GUANYLYLTRANSFERASE"/>
    <property type="match status" value="1"/>
</dbReference>
<dbReference type="Pfam" id="PF14602">
    <property type="entry name" value="Hexapep_2"/>
    <property type="match status" value="1"/>
</dbReference>
<dbReference type="Pfam" id="PF14805">
    <property type="entry name" value="THDPS_N_2"/>
    <property type="match status" value="1"/>
</dbReference>
<dbReference type="SUPFAM" id="SSF51161">
    <property type="entry name" value="Trimeric LpxA-like enzymes"/>
    <property type="match status" value="1"/>
</dbReference>
<dbReference type="PROSITE" id="PS00101">
    <property type="entry name" value="HEXAPEP_TRANSFERASES"/>
    <property type="match status" value="1"/>
</dbReference>
<reference key="1">
    <citation type="journal article" date="2008" name="J. Bacteriol.">
        <title>Comparative genome sequence analysis of multidrug-resistant Acinetobacter baumannii.</title>
        <authorList>
            <person name="Adams M.D."/>
            <person name="Goglin K."/>
            <person name="Molyneaux N."/>
            <person name="Hujer K.M."/>
            <person name="Lavender H."/>
            <person name="Jamison J.J."/>
            <person name="MacDonald I.J."/>
            <person name="Martin K.M."/>
            <person name="Russo T."/>
            <person name="Campagnari A.A."/>
            <person name="Hujer A.M."/>
            <person name="Bonomo R.A."/>
            <person name="Gill S.R."/>
        </authorList>
    </citation>
    <scope>NUCLEOTIDE SEQUENCE [LARGE SCALE GENOMIC DNA]</scope>
    <source>
        <strain>AB307-0294</strain>
    </source>
</reference>
<feature type="chain" id="PRO_1000134022" description="2,3,4,5-tetrahydropyridine-2,6-dicarboxylate N-succinyltransferase">
    <location>
        <begin position="1"/>
        <end position="273"/>
    </location>
</feature>
<gene>
    <name evidence="1" type="primary">dapD</name>
    <name type="ordered locus">ABBFA_000907</name>
</gene>
<keyword id="KW-0012">Acyltransferase</keyword>
<keyword id="KW-0028">Amino-acid biosynthesis</keyword>
<keyword id="KW-0963">Cytoplasm</keyword>
<keyword id="KW-0220">Diaminopimelate biosynthesis</keyword>
<keyword id="KW-0457">Lysine biosynthesis</keyword>
<keyword id="KW-0677">Repeat</keyword>
<keyword id="KW-0808">Transferase</keyword>
<proteinExistence type="inferred from homology"/>
<organism>
    <name type="scientific">Acinetobacter baumannii (strain AB307-0294)</name>
    <dbReference type="NCBI Taxonomy" id="557600"/>
    <lineage>
        <taxon>Bacteria</taxon>
        <taxon>Pseudomonadati</taxon>
        <taxon>Pseudomonadota</taxon>
        <taxon>Gammaproteobacteria</taxon>
        <taxon>Moraxellales</taxon>
        <taxon>Moraxellaceae</taxon>
        <taxon>Acinetobacter</taxon>
        <taxon>Acinetobacter calcoaceticus/baumannii complex</taxon>
    </lineage>
</organism>
<name>DAPD_ACIB3</name>
<evidence type="ECO:0000255" key="1">
    <source>
        <dbReference type="HAMAP-Rule" id="MF_00811"/>
    </source>
</evidence>
<sequence>MSQLSTIIEQAFEDRANFTAADCPSEIRQAVEEAIAGLDNGTLRVAEKINGEWVVHQWLKKAVLLSFKLNDNKPIESCDLRFYDKVETKFSGWTEEQFKAAGVRVVPPAVARRGSFQAKNVVLMPSYVNIGAYVDEGTMVDTWATVGSCAQIGKNVHLSGGVGIGGVLEPLQANPTIIEDNCFIGARSEIVEGVIVEEGSVISMGVYIGQSTRIYDRETGEIHYGRVPAGSVVVPGNLPSADGKYSLYAAIIVKKVDAQTRAKTSLNDLLRAD</sequence>